<organism>
    <name type="scientific">Homo sapiens</name>
    <name type="common">Human</name>
    <dbReference type="NCBI Taxonomy" id="9606"/>
    <lineage>
        <taxon>Eukaryota</taxon>
        <taxon>Metazoa</taxon>
        <taxon>Chordata</taxon>
        <taxon>Craniata</taxon>
        <taxon>Vertebrata</taxon>
        <taxon>Euteleostomi</taxon>
        <taxon>Mammalia</taxon>
        <taxon>Eutheria</taxon>
        <taxon>Euarchontoglires</taxon>
        <taxon>Primates</taxon>
        <taxon>Haplorrhini</taxon>
        <taxon>Catarrhini</taxon>
        <taxon>Hominidae</taxon>
        <taxon>Homo</taxon>
    </lineage>
</organism>
<gene>
    <name type="primary">OR51G1</name>
    <name type="synonym">OR51G3P</name>
</gene>
<proteinExistence type="evidence at transcript level"/>
<keyword id="KW-1003">Cell membrane</keyword>
<keyword id="KW-1015">Disulfide bond</keyword>
<keyword id="KW-0297">G-protein coupled receptor</keyword>
<keyword id="KW-0325">Glycoprotein</keyword>
<keyword id="KW-0472">Membrane</keyword>
<keyword id="KW-0552">Olfaction</keyword>
<keyword id="KW-0675">Receptor</keyword>
<keyword id="KW-1185">Reference proteome</keyword>
<keyword id="KW-0716">Sensory transduction</keyword>
<keyword id="KW-0807">Transducer</keyword>
<keyword id="KW-0812">Transmembrane</keyword>
<keyword id="KW-1133">Transmembrane helix</keyword>
<feature type="chain" id="PRO_0000150754" description="Olfactory receptor 51G1">
    <location>
        <begin position="1"/>
        <end position="321"/>
    </location>
</feature>
<feature type="topological domain" description="Extracellular" evidence="1">
    <location>
        <begin position="1"/>
        <end position="27"/>
    </location>
</feature>
<feature type="transmembrane region" description="Helical; Name=1" evidence="1">
    <location>
        <begin position="28"/>
        <end position="48"/>
    </location>
</feature>
<feature type="topological domain" description="Cytoplasmic" evidence="1">
    <location>
        <begin position="49"/>
        <end position="56"/>
    </location>
</feature>
<feature type="transmembrane region" description="Helical; Name=2" evidence="1">
    <location>
        <begin position="57"/>
        <end position="77"/>
    </location>
</feature>
<feature type="topological domain" description="Extracellular" evidence="1">
    <location>
        <begin position="78"/>
        <end position="101"/>
    </location>
</feature>
<feature type="transmembrane region" description="Helical; Name=3" evidence="1">
    <location>
        <begin position="102"/>
        <end position="122"/>
    </location>
</feature>
<feature type="topological domain" description="Cytoplasmic" evidence="1">
    <location>
        <begin position="123"/>
        <end position="141"/>
    </location>
</feature>
<feature type="transmembrane region" description="Helical; Name=4" evidence="1">
    <location>
        <begin position="142"/>
        <end position="162"/>
    </location>
</feature>
<feature type="topological domain" description="Extracellular" evidence="1">
    <location>
        <begin position="163"/>
        <end position="198"/>
    </location>
</feature>
<feature type="transmembrane region" description="Helical; Name=5" evidence="1">
    <location>
        <begin position="199"/>
        <end position="219"/>
    </location>
</feature>
<feature type="topological domain" description="Cytoplasmic" evidence="1">
    <location>
        <begin position="220"/>
        <end position="239"/>
    </location>
</feature>
<feature type="transmembrane region" description="Helical; Name=6" evidence="1">
    <location>
        <begin position="240"/>
        <end position="260"/>
    </location>
</feature>
<feature type="topological domain" description="Extracellular" evidence="1">
    <location>
        <begin position="261"/>
        <end position="275"/>
    </location>
</feature>
<feature type="transmembrane region" description="Helical; Name=7" evidence="1">
    <location>
        <begin position="276"/>
        <end position="296"/>
    </location>
</feature>
<feature type="topological domain" description="Cytoplasmic" evidence="1">
    <location>
        <begin position="297"/>
        <end position="321"/>
    </location>
</feature>
<feature type="glycosylation site" description="N-linked (GlcNAc...) asparagine" evidence="1">
    <location>
        <position position="6"/>
    </location>
</feature>
<feature type="disulfide bond" evidence="2">
    <location>
        <begin position="99"/>
        <end position="191"/>
    </location>
</feature>
<feature type="sequence variant" id="VAR_053324" description="In dbSNP:rs10836954.">
    <original>S</original>
    <variation>L</variation>
    <location>
        <position position="114"/>
    </location>
</feature>
<feature type="sequence variant" id="VAR_053325" description="In dbSNP:rs34742470.">
    <original>R</original>
    <variation>H</variation>
    <location>
        <position position="124"/>
    </location>
</feature>
<feature type="sequence variant" id="VAR_034318" description="In dbSNP:rs1378739." evidence="3">
    <original>Y</original>
    <variation>S</variation>
    <location>
        <position position="125"/>
    </location>
</feature>
<feature type="sequence variant" id="VAR_053326" description="In dbSNP:rs12796015.">
    <original>I</original>
    <variation>T</variation>
    <location>
        <position position="195"/>
    </location>
</feature>
<feature type="sequence variant" id="VAR_062080" description="In dbSNP:rs57920748.">
    <original>Q</original>
    <variation>H</variation>
    <location>
        <position position="303"/>
    </location>
</feature>
<reference key="1">
    <citation type="submission" date="2001-07" db="EMBL/GenBank/DDBJ databases">
        <title>Genome-wide discovery and analysis of human seven transmembrane helix receptor genes.</title>
        <authorList>
            <person name="Suwa M."/>
            <person name="Sato T."/>
            <person name="Okouchi I."/>
            <person name="Arita M."/>
            <person name="Futami K."/>
            <person name="Matsumoto S."/>
            <person name="Tsutsumi S."/>
            <person name="Aburatani H."/>
            <person name="Asai K."/>
            <person name="Akiyama Y."/>
        </authorList>
    </citation>
    <scope>NUCLEOTIDE SEQUENCE [GENOMIC DNA]</scope>
</reference>
<reference key="2">
    <citation type="journal article" date="2004" name="Genome Res.">
        <title>The status, quality, and expansion of the NIH full-length cDNA project: the Mammalian Gene Collection (MGC).</title>
        <authorList>
            <consortium name="The MGC Project Team"/>
        </authorList>
    </citation>
    <scope>NUCLEOTIDE SEQUENCE [LARGE SCALE MRNA]</scope>
    <scope>VARIANT SER-125</scope>
    <source>
        <tissue>Testis</tissue>
    </source>
</reference>
<reference key="3">
    <citation type="journal article" date="2004" name="Proc. Natl. Acad. Sci. U.S.A.">
        <title>The human olfactory receptor gene family.</title>
        <authorList>
            <person name="Malnic B."/>
            <person name="Godfrey P.A."/>
            <person name="Buck L.B."/>
        </authorList>
    </citation>
    <scope>IDENTIFICATION</scope>
</reference>
<reference key="4">
    <citation type="journal article" date="2004" name="Proc. Natl. Acad. Sci. U.S.A.">
        <authorList>
            <person name="Malnic B."/>
            <person name="Godfrey P.A."/>
            <person name="Buck L.B."/>
        </authorList>
    </citation>
    <scope>ERRATUM OF PUBMED:14983052</scope>
</reference>
<comment type="function">
    <text evidence="4">Odorant receptor.</text>
</comment>
<comment type="subcellular location">
    <subcellularLocation>
        <location>Cell membrane</location>
        <topology>Multi-pass membrane protein</topology>
    </subcellularLocation>
</comment>
<comment type="similarity">
    <text evidence="2">Belongs to the G-protein coupled receptor 1 family.</text>
</comment>
<comment type="online information" name="Human Olfactory Receptor Data Exploratorium (HORDE)">
    <link uri="http://genome.weizmann.ac.il/horde/card/index/symbol:OR51G1"/>
</comment>
<accession>Q8NGK1</accession>
<accession>B9EGW8</accession>
<accession>Q6IFH6</accession>
<name>O51G1_HUMAN</name>
<sequence>MTILLNSSLQRATFFLTGFQGLEGLHGWISIPFCFIYLTVILGNLTILHVICTDATLHGPMYYFLGMLAVTDLGLCLSTLPTVLGIFWFDTREIGIPACFTQLFFIHTLSSMESSVLLSMSIDRYVAVCNPLHDSTVLTPACIVKMGLSSVLRSALLILPLPFLLKRFQYCHSHVLAHAYCLHLEIMKLACSSIIVNHIYGLFVVACTVGVDSLLIFLSYALILRTVLSIASHQERLRALNTCVSHICAVLLFYIPMIGLSLVHRFGEHLPRVVHLFMSYVYLLVPPLMNPIIYSIKTKQIRQRIIKKFQFIKSLRCFWKD</sequence>
<evidence type="ECO:0000255" key="1"/>
<evidence type="ECO:0000255" key="2">
    <source>
        <dbReference type="PROSITE-ProRule" id="PRU00521"/>
    </source>
</evidence>
<evidence type="ECO:0000269" key="3">
    <source>
    </source>
</evidence>
<evidence type="ECO:0000305" key="4"/>
<dbReference type="EMBL" id="AB065793">
    <property type="protein sequence ID" value="BAC06012.1"/>
    <property type="molecule type" value="Genomic_DNA"/>
</dbReference>
<dbReference type="EMBL" id="BC136852">
    <property type="protein sequence ID" value="AAI36853.1"/>
    <property type="molecule type" value="mRNA"/>
</dbReference>
<dbReference type="EMBL" id="BC136861">
    <property type="protein sequence ID" value="AAI36862.1"/>
    <property type="molecule type" value="mRNA"/>
</dbReference>
<dbReference type="EMBL" id="BK004286">
    <property type="protein sequence ID" value="DAA04684.1"/>
    <property type="molecule type" value="Genomic_DNA"/>
</dbReference>
<dbReference type="RefSeq" id="NP_001005237.1">
    <property type="nucleotide sequence ID" value="NM_001005237.1"/>
</dbReference>
<dbReference type="SMR" id="Q8NGK1"/>
<dbReference type="FunCoup" id="Q8NGK1">
    <property type="interactions" value="462"/>
</dbReference>
<dbReference type="STRING" id="9606.ENSP00000485612"/>
<dbReference type="GlyCosmos" id="Q8NGK1">
    <property type="glycosylation" value="1 site, No reported glycans"/>
</dbReference>
<dbReference type="GlyGen" id="Q8NGK1">
    <property type="glycosylation" value="1 site"/>
</dbReference>
<dbReference type="iPTMnet" id="Q8NGK1"/>
<dbReference type="PhosphoSitePlus" id="Q8NGK1"/>
<dbReference type="BioMuta" id="OR51G1"/>
<dbReference type="DMDM" id="38372713"/>
<dbReference type="PaxDb" id="9606-ENSP00000322546"/>
<dbReference type="Antibodypedia" id="78534">
    <property type="antibodies" value="95 antibodies from 21 providers"/>
</dbReference>
<dbReference type="DNASU" id="79324"/>
<dbReference type="Ensembl" id="ENST00000623849.1">
    <property type="protein sequence ID" value="ENSP00000485612.1"/>
    <property type="gene ID" value="ENSG00000278870.2"/>
</dbReference>
<dbReference type="GeneID" id="79324"/>
<dbReference type="KEGG" id="hsa:79324"/>
<dbReference type="MANE-Select" id="ENST00000623849.1">
    <property type="protein sequence ID" value="ENSP00000485612.1"/>
    <property type="RefSeq nucleotide sequence ID" value="NM_001005237.1"/>
    <property type="RefSeq protein sequence ID" value="NP_001005237.1"/>
</dbReference>
<dbReference type="UCSC" id="uc010qyr.2">
    <property type="organism name" value="human"/>
</dbReference>
<dbReference type="AGR" id="HGNC:14738"/>
<dbReference type="CTD" id="79324"/>
<dbReference type="GeneCards" id="OR51G1"/>
<dbReference type="HGNC" id="HGNC:14738">
    <property type="gene designation" value="OR51G1"/>
</dbReference>
<dbReference type="HPA" id="ENSG00000278870">
    <property type="expression patterns" value="Not detected"/>
</dbReference>
<dbReference type="neXtProt" id="NX_Q8NGK1"/>
<dbReference type="PharmGKB" id="PA32376"/>
<dbReference type="VEuPathDB" id="HostDB:ENSG00000278870"/>
<dbReference type="eggNOG" id="ENOG502QVH7">
    <property type="taxonomic scope" value="Eukaryota"/>
</dbReference>
<dbReference type="GeneTree" id="ENSGT01130000278286"/>
<dbReference type="HOGENOM" id="CLU_012526_0_0_1"/>
<dbReference type="InParanoid" id="Q8NGK1"/>
<dbReference type="OMA" id="FQYCRSH"/>
<dbReference type="OrthoDB" id="6144443at2759"/>
<dbReference type="PAN-GO" id="Q8NGK1">
    <property type="GO annotations" value="2 GO annotations based on evolutionary models"/>
</dbReference>
<dbReference type="PhylomeDB" id="Q8NGK1"/>
<dbReference type="TreeFam" id="TF342735"/>
<dbReference type="PathwayCommons" id="Q8NGK1"/>
<dbReference type="Reactome" id="R-HSA-9752946">
    <property type="pathway name" value="Expression and translocation of olfactory receptors"/>
</dbReference>
<dbReference type="BioGRID-ORCS" id="79324">
    <property type="hits" value="13 hits in 732 CRISPR screens"/>
</dbReference>
<dbReference type="GeneWiki" id="OR51G1"/>
<dbReference type="GenomeRNAi" id="79324"/>
<dbReference type="Pharos" id="Q8NGK1">
    <property type="development level" value="Tdark"/>
</dbReference>
<dbReference type="PRO" id="PR:Q8NGK1"/>
<dbReference type="Proteomes" id="UP000005640">
    <property type="component" value="Chromosome 11"/>
</dbReference>
<dbReference type="RNAct" id="Q8NGK1">
    <property type="molecule type" value="protein"/>
</dbReference>
<dbReference type="ExpressionAtlas" id="Q8NGK1">
    <property type="expression patterns" value="baseline and differential"/>
</dbReference>
<dbReference type="GO" id="GO:0005886">
    <property type="term" value="C:plasma membrane"/>
    <property type="evidence" value="ECO:0000318"/>
    <property type="project" value="GO_Central"/>
</dbReference>
<dbReference type="GO" id="GO:0004930">
    <property type="term" value="F:G protein-coupled receptor activity"/>
    <property type="evidence" value="ECO:0007669"/>
    <property type="project" value="UniProtKB-KW"/>
</dbReference>
<dbReference type="GO" id="GO:0004984">
    <property type="term" value="F:olfactory receptor activity"/>
    <property type="evidence" value="ECO:0000318"/>
    <property type="project" value="GO_Central"/>
</dbReference>
<dbReference type="CDD" id="cd15222">
    <property type="entry name" value="7tmA_OR51-like"/>
    <property type="match status" value="1"/>
</dbReference>
<dbReference type="FunFam" id="1.20.1070.10:FF:000002">
    <property type="entry name" value="Olfactory receptor"/>
    <property type="match status" value="1"/>
</dbReference>
<dbReference type="Gene3D" id="1.20.1070.10">
    <property type="entry name" value="Rhodopsin 7-helix transmembrane proteins"/>
    <property type="match status" value="1"/>
</dbReference>
<dbReference type="InterPro" id="IPR000276">
    <property type="entry name" value="GPCR_Rhodpsn"/>
</dbReference>
<dbReference type="InterPro" id="IPR017452">
    <property type="entry name" value="GPCR_Rhodpsn_7TM"/>
</dbReference>
<dbReference type="InterPro" id="IPR000725">
    <property type="entry name" value="Olfact_rcpt"/>
</dbReference>
<dbReference type="InterPro" id="IPR050402">
    <property type="entry name" value="OR51/52/56-like"/>
</dbReference>
<dbReference type="PANTHER" id="PTHR26450:SF140">
    <property type="entry name" value="OLFACTORY RECEPTOR 51G1"/>
    <property type="match status" value="1"/>
</dbReference>
<dbReference type="PANTHER" id="PTHR26450">
    <property type="entry name" value="OLFACTORY RECEPTOR 56B1-RELATED"/>
    <property type="match status" value="1"/>
</dbReference>
<dbReference type="Pfam" id="PF13853">
    <property type="entry name" value="7tm_4"/>
    <property type="match status" value="1"/>
</dbReference>
<dbReference type="PRINTS" id="PR00237">
    <property type="entry name" value="GPCRRHODOPSN"/>
</dbReference>
<dbReference type="PRINTS" id="PR00245">
    <property type="entry name" value="OLFACTORYR"/>
</dbReference>
<dbReference type="SUPFAM" id="SSF81321">
    <property type="entry name" value="Family A G protein-coupled receptor-like"/>
    <property type="match status" value="1"/>
</dbReference>
<dbReference type="PROSITE" id="PS00237">
    <property type="entry name" value="G_PROTEIN_RECEP_F1_1"/>
    <property type="match status" value="1"/>
</dbReference>
<dbReference type="PROSITE" id="PS50262">
    <property type="entry name" value="G_PROTEIN_RECEP_F1_2"/>
    <property type="match status" value="1"/>
</dbReference>
<protein>
    <recommendedName>
        <fullName>Olfactory receptor 51G1</fullName>
    </recommendedName>
    <alternativeName>
        <fullName>Olfactory receptor 51G3</fullName>
    </alternativeName>
    <alternativeName>
        <fullName>Olfactory receptor OR11-29</fullName>
    </alternativeName>
</protein>